<organism>
    <name type="scientific">Burkholderia pseudomallei (strain 668)</name>
    <dbReference type="NCBI Taxonomy" id="320373"/>
    <lineage>
        <taxon>Bacteria</taxon>
        <taxon>Pseudomonadati</taxon>
        <taxon>Pseudomonadota</taxon>
        <taxon>Betaproteobacteria</taxon>
        <taxon>Burkholderiales</taxon>
        <taxon>Burkholderiaceae</taxon>
        <taxon>Burkholderia</taxon>
        <taxon>pseudomallei group</taxon>
    </lineage>
</organism>
<protein>
    <recommendedName>
        <fullName evidence="1">Phosphoenolpyruvate carboxylase</fullName>
        <shortName evidence="1">PEPC</shortName>
        <shortName evidence="1">PEPCase</shortName>
        <ecNumber evidence="1">4.1.1.31</ecNumber>
    </recommendedName>
</protein>
<gene>
    <name evidence="1" type="primary">ppc</name>
    <name type="ordered locus">BURPS668_1069</name>
</gene>
<feature type="chain" id="PRO_1000025552" description="Phosphoenolpyruvate carboxylase">
    <location>
        <begin position="1"/>
        <end position="994"/>
    </location>
</feature>
<feature type="region of interest" description="Disordered" evidence="2">
    <location>
        <begin position="1"/>
        <end position="66"/>
    </location>
</feature>
<feature type="compositionally biased region" description="Low complexity" evidence="2">
    <location>
        <begin position="14"/>
        <end position="25"/>
    </location>
</feature>
<feature type="compositionally biased region" description="Low complexity" evidence="2">
    <location>
        <begin position="41"/>
        <end position="54"/>
    </location>
</feature>
<feature type="active site" evidence="1">
    <location>
        <position position="204"/>
    </location>
</feature>
<feature type="active site" evidence="1">
    <location>
        <position position="646"/>
    </location>
</feature>
<evidence type="ECO:0000255" key="1">
    <source>
        <dbReference type="HAMAP-Rule" id="MF_00595"/>
    </source>
</evidence>
<evidence type="ECO:0000256" key="2">
    <source>
        <dbReference type="SAM" id="MobiDB-lite"/>
    </source>
</evidence>
<keyword id="KW-0120">Carbon dioxide fixation</keyword>
<keyword id="KW-0456">Lyase</keyword>
<keyword id="KW-0460">Magnesium</keyword>
<dbReference type="EC" id="4.1.1.31" evidence="1"/>
<dbReference type="EMBL" id="CP000570">
    <property type="protein sequence ID" value="ABN83607.1"/>
    <property type="molecule type" value="Genomic_DNA"/>
</dbReference>
<dbReference type="RefSeq" id="WP_011851243.1">
    <property type="nucleotide sequence ID" value="NC_009074.1"/>
</dbReference>
<dbReference type="SMR" id="A3N6Z8"/>
<dbReference type="KEGG" id="bpd:BURPS668_1069"/>
<dbReference type="HOGENOM" id="CLU_006557_2_0_4"/>
<dbReference type="GO" id="GO:0005829">
    <property type="term" value="C:cytosol"/>
    <property type="evidence" value="ECO:0007669"/>
    <property type="project" value="TreeGrafter"/>
</dbReference>
<dbReference type="GO" id="GO:0000287">
    <property type="term" value="F:magnesium ion binding"/>
    <property type="evidence" value="ECO:0007669"/>
    <property type="project" value="UniProtKB-UniRule"/>
</dbReference>
<dbReference type="GO" id="GO:0008964">
    <property type="term" value="F:phosphoenolpyruvate carboxylase activity"/>
    <property type="evidence" value="ECO:0007669"/>
    <property type="project" value="UniProtKB-UniRule"/>
</dbReference>
<dbReference type="GO" id="GO:0015977">
    <property type="term" value="P:carbon fixation"/>
    <property type="evidence" value="ECO:0007669"/>
    <property type="project" value="UniProtKB-UniRule"/>
</dbReference>
<dbReference type="GO" id="GO:0006107">
    <property type="term" value="P:oxaloacetate metabolic process"/>
    <property type="evidence" value="ECO:0007669"/>
    <property type="project" value="UniProtKB-UniRule"/>
</dbReference>
<dbReference type="GO" id="GO:0006099">
    <property type="term" value="P:tricarboxylic acid cycle"/>
    <property type="evidence" value="ECO:0007669"/>
    <property type="project" value="InterPro"/>
</dbReference>
<dbReference type="Gene3D" id="1.20.1440.90">
    <property type="entry name" value="Phosphoenolpyruvate/pyruvate domain"/>
    <property type="match status" value="1"/>
</dbReference>
<dbReference type="HAMAP" id="MF_00595">
    <property type="entry name" value="PEPcase_type1"/>
    <property type="match status" value="1"/>
</dbReference>
<dbReference type="InterPro" id="IPR021135">
    <property type="entry name" value="PEP_COase"/>
</dbReference>
<dbReference type="InterPro" id="IPR022805">
    <property type="entry name" value="PEP_COase_bac/pln-type"/>
</dbReference>
<dbReference type="InterPro" id="IPR018129">
    <property type="entry name" value="PEP_COase_Lys_AS"/>
</dbReference>
<dbReference type="InterPro" id="IPR033129">
    <property type="entry name" value="PEPCASE_His_AS"/>
</dbReference>
<dbReference type="InterPro" id="IPR015813">
    <property type="entry name" value="Pyrv/PenolPyrv_kinase-like_dom"/>
</dbReference>
<dbReference type="NCBIfam" id="NF000584">
    <property type="entry name" value="PRK00009.1"/>
    <property type="match status" value="1"/>
</dbReference>
<dbReference type="PANTHER" id="PTHR30523">
    <property type="entry name" value="PHOSPHOENOLPYRUVATE CARBOXYLASE"/>
    <property type="match status" value="1"/>
</dbReference>
<dbReference type="PANTHER" id="PTHR30523:SF6">
    <property type="entry name" value="PHOSPHOENOLPYRUVATE CARBOXYLASE"/>
    <property type="match status" value="1"/>
</dbReference>
<dbReference type="Pfam" id="PF00311">
    <property type="entry name" value="PEPcase"/>
    <property type="match status" value="1"/>
</dbReference>
<dbReference type="PRINTS" id="PR00150">
    <property type="entry name" value="PEPCARBXLASE"/>
</dbReference>
<dbReference type="SUPFAM" id="SSF51621">
    <property type="entry name" value="Phosphoenolpyruvate/pyruvate domain"/>
    <property type="match status" value="1"/>
</dbReference>
<dbReference type="PROSITE" id="PS00781">
    <property type="entry name" value="PEPCASE_1"/>
    <property type="match status" value="1"/>
</dbReference>
<dbReference type="PROSITE" id="PS00393">
    <property type="entry name" value="PEPCASE_2"/>
    <property type="match status" value="1"/>
</dbReference>
<name>CAPP_BURP6</name>
<reference key="1">
    <citation type="journal article" date="2010" name="Genome Biol. Evol.">
        <title>Continuing evolution of Burkholderia mallei through genome reduction and large-scale rearrangements.</title>
        <authorList>
            <person name="Losada L."/>
            <person name="Ronning C.M."/>
            <person name="DeShazer D."/>
            <person name="Woods D."/>
            <person name="Fedorova N."/>
            <person name="Kim H.S."/>
            <person name="Shabalina S.A."/>
            <person name="Pearson T.R."/>
            <person name="Brinkac L."/>
            <person name="Tan P."/>
            <person name="Nandi T."/>
            <person name="Crabtree J."/>
            <person name="Badger J."/>
            <person name="Beckstrom-Sternberg S."/>
            <person name="Saqib M."/>
            <person name="Schutzer S.E."/>
            <person name="Keim P."/>
            <person name="Nierman W.C."/>
        </authorList>
    </citation>
    <scope>NUCLEOTIDE SEQUENCE [LARGE SCALE GENOMIC DNA]</scope>
    <source>
        <strain>668</strain>
    </source>
</reference>
<accession>A3N6Z8</accession>
<comment type="function">
    <text evidence="1">Forms oxaloacetate, a four-carbon dicarboxylic acid source for the tricarboxylic acid cycle.</text>
</comment>
<comment type="catalytic activity">
    <reaction evidence="1">
        <text>oxaloacetate + phosphate = phosphoenolpyruvate + hydrogencarbonate</text>
        <dbReference type="Rhea" id="RHEA:28370"/>
        <dbReference type="ChEBI" id="CHEBI:16452"/>
        <dbReference type="ChEBI" id="CHEBI:17544"/>
        <dbReference type="ChEBI" id="CHEBI:43474"/>
        <dbReference type="ChEBI" id="CHEBI:58702"/>
        <dbReference type="EC" id="4.1.1.31"/>
    </reaction>
</comment>
<comment type="cofactor">
    <cofactor evidence="1">
        <name>Mg(2+)</name>
        <dbReference type="ChEBI" id="CHEBI:18420"/>
    </cofactor>
</comment>
<comment type="similarity">
    <text evidence="1">Belongs to the PEPCase type 1 family.</text>
</comment>
<proteinExistence type="inferred from homology"/>
<sequence>MKSSGSARATRRNAVSSSSAPAHAEPPARRAAKSARKLDGAAARPLAPTNAASAKPQGRTREDKDRPLFEDIRYLGRLLGDVVREQEGDAVFDVVETIRQTAVKFRREDDKAAAQTLEKMLRKLTPEQTVSVVRAFSYFSHLANIAEDRHHNRRRRIHALAGSAAQAGTVAYALDKLKQAGDASSKTIKQFFEGALIVPVLTAHPTEVQRKSILDAQHDIARLLAERDQPLTARELAHNEALLRARVTTLWQTRMLRDARLTVADEIENALSYYRATFLDELPALYADIEEALAEHGLRARVPAFFQMGSWIGGDRDGNPNVTAATLDEAISRQAAVIFEHYLEQVHKLGAELSVSNLLVGASDALKALAAASPDQSPHRVDEPYRRALIGVYTRLAASARVRLGEGTVPVRSAGRGAAPVRATPYADAEEFAADLRVLTDSLALHHGESLATPRLAPLMRAAEVFGFHLASIDLRQSSDIHEAVVAELLARGGVEADYAALPEADKLRVLLAALADPRPLRSPYLDYSDLAKSELGVLERAHAIRAQFGARAVRNYIISHTETVSDLVEVLLLQKETGLFEGTLGTPHANARNGLMVIPLFETIADLRNASDIMRAFFALPGVGELLAHQGHEQEVMLGYSDSNKDGGFLTSNWELYRAELALVDLFDERGIKLRLFHGRGGTVGRGGGPTYQAILSQPPGTVNGQIRLTEQGEVIASKFANPEIGRRNLETVVAATLEATLAPHSNAPKQLPAFEAAMQTLSDAAMASYRALVYETPGFTDYFFSSTPITEIAELNIGSRPASRKLQDPKNRKIEDLRAIPWGFSWGQCRLLLTGWYGFGSAVAAYLDGAPDAAERGKRVALLKKMNKTWPFFANLLSNMDMVLAKTDLAVASRYAQLVADKKLRKHVFERIVAEWHRTADALAEITGAHARLAANPLLARSIKNRFPYLDPLNHLQVELIKRHRAGDTNARLRRGIHLTINGIAAGLRNTG</sequence>